<dbReference type="EMBL" id="CP001096">
    <property type="protein sequence ID" value="ACF01483.1"/>
    <property type="molecule type" value="Genomic_DNA"/>
</dbReference>
<dbReference type="RefSeq" id="WP_012496123.1">
    <property type="nucleotide sequence ID" value="NC_011004.1"/>
</dbReference>
<dbReference type="SMR" id="B3QJH7"/>
<dbReference type="KEGG" id="rpt:Rpal_2975"/>
<dbReference type="HOGENOM" id="CLU_086029_0_0_5"/>
<dbReference type="OrthoDB" id="9804792at2"/>
<dbReference type="Proteomes" id="UP000001725">
    <property type="component" value="Chromosome"/>
</dbReference>
<dbReference type="GO" id="GO:0043590">
    <property type="term" value="C:bacterial nucleoid"/>
    <property type="evidence" value="ECO:0007669"/>
    <property type="project" value="TreeGrafter"/>
</dbReference>
<dbReference type="GO" id="GO:0006310">
    <property type="term" value="P:DNA recombination"/>
    <property type="evidence" value="ECO:0007669"/>
    <property type="project" value="UniProtKB-UniRule"/>
</dbReference>
<dbReference type="GO" id="GO:0006302">
    <property type="term" value="P:double-strand break repair"/>
    <property type="evidence" value="ECO:0007669"/>
    <property type="project" value="TreeGrafter"/>
</dbReference>
<dbReference type="Gene3D" id="2.40.50.140">
    <property type="entry name" value="Nucleic acid-binding proteins"/>
    <property type="match status" value="1"/>
</dbReference>
<dbReference type="Gene3D" id="1.20.1440.120">
    <property type="entry name" value="Recombination protein O, C-terminal domain"/>
    <property type="match status" value="1"/>
</dbReference>
<dbReference type="HAMAP" id="MF_00201">
    <property type="entry name" value="RecO"/>
    <property type="match status" value="1"/>
</dbReference>
<dbReference type="InterPro" id="IPR037278">
    <property type="entry name" value="ARFGAP/RecO"/>
</dbReference>
<dbReference type="InterPro" id="IPR022572">
    <property type="entry name" value="DNA_rep/recomb_RecO_N"/>
</dbReference>
<dbReference type="InterPro" id="IPR012340">
    <property type="entry name" value="NA-bd_OB-fold"/>
</dbReference>
<dbReference type="InterPro" id="IPR003717">
    <property type="entry name" value="RecO"/>
</dbReference>
<dbReference type="InterPro" id="IPR042242">
    <property type="entry name" value="RecO_C"/>
</dbReference>
<dbReference type="NCBIfam" id="TIGR00613">
    <property type="entry name" value="reco"/>
    <property type="match status" value="1"/>
</dbReference>
<dbReference type="PANTHER" id="PTHR33991">
    <property type="entry name" value="DNA REPAIR PROTEIN RECO"/>
    <property type="match status" value="1"/>
</dbReference>
<dbReference type="PANTHER" id="PTHR33991:SF1">
    <property type="entry name" value="DNA REPAIR PROTEIN RECO"/>
    <property type="match status" value="1"/>
</dbReference>
<dbReference type="Pfam" id="PF02565">
    <property type="entry name" value="RecO_C"/>
    <property type="match status" value="1"/>
</dbReference>
<dbReference type="Pfam" id="PF11967">
    <property type="entry name" value="RecO_N"/>
    <property type="match status" value="1"/>
</dbReference>
<dbReference type="SUPFAM" id="SSF57863">
    <property type="entry name" value="ArfGap/RecO-like zinc finger"/>
    <property type="match status" value="1"/>
</dbReference>
<dbReference type="SUPFAM" id="SSF50249">
    <property type="entry name" value="Nucleic acid-binding proteins"/>
    <property type="match status" value="1"/>
</dbReference>
<organism>
    <name type="scientific">Rhodopseudomonas palustris (strain TIE-1)</name>
    <dbReference type="NCBI Taxonomy" id="395960"/>
    <lineage>
        <taxon>Bacteria</taxon>
        <taxon>Pseudomonadati</taxon>
        <taxon>Pseudomonadota</taxon>
        <taxon>Alphaproteobacteria</taxon>
        <taxon>Hyphomicrobiales</taxon>
        <taxon>Nitrobacteraceae</taxon>
        <taxon>Rhodopseudomonas</taxon>
    </lineage>
</organism>
<keyword id="KW-0227">DNA damage</keyword>
<keyword id="KW-0233">DNA recombination</keyword>
<keyword id="KW-0234">DNA repair</keyword>
<proteinExistence type="inferred from homology"/>
<feature type="chain" id="PRO_1000099403" description="DNA repair protein RecO">
    <location>
        <begin position="1"/>
        <end position="250"/>
    </location>
</feature>
<gene>
    <name evidence="1" type="primary">recO</name>
    <name type="ordered locus">Rpal_2975</name>
</gene>
<protein>
    <recommendedName>
        <fullName evidence="1">DNA repair protein RecO</fullName>
    </recommendedName>
    <alternativeName>
        <fullName evidence="1">Recombination protein O</fullName>
    </alternativeName>
</protein>
<reference key="1">
    <citation type="submission" date="2008-05" db="EMBL/GenBank/DDBJ databases">
        <title>Complete sequence of Rhodopseudomonas palustris TIE-1.</title>
        <authorList>
            <consortium name="US DOE Joint Genome Institute"/>
            <person name="Lucas S."/>
            <person name="Copeland A."/>
            <person name="Lapidus A."/>
            <person name="Glavina del Rio T."/>
            <person name="Dalin E."/>
            <person name="Tice H."/>
            <person name="Pitluck S."/>
            <person name="Chain P."/>
            <person name="Malfatti S."/>
            <person name="Shin M."/>
            <person name="Vergez L."/>
            <person name="Lang D."/>
            <person name="Schmutz J."/>
            <person name="Larimer F."/>
            <person name="Land M."/>
            <person name="Hauser L."/>
            <person name="Kyrpides N."/>
            <person name="Mikhailova N."/>
            <person name="Emerson D."/>
            <person name="Newman D.K."/>
            <person name="Roden E."/>
            <person name="Richardson P."/>
        </authorList>
    </citation>
    <scope>NUCLEOTIDE SEQUENCE [LARGE SCALE GENOMIC DNA]</scope>
    <source>
        <strain>TIE-1</strain>
    </source>
</reference>
<sequence>MEWSDEGIILGVRRHGESAAIVELLTRGHGRHLGMVRGGASARMRPLLQPGNSVLASWRARLDEHLGYYQLEATKMRAATLLGSSHAVYGVTHLASLARLLPERDPHEEIYQRLVLTLDDFDDFGVAAAHLIRFELAILAELGFGLDLSACAATGSTTELIYVSPKSGSAVSRSAGEPWRDRLLRLPAFLRDDEAESGNGWSGQDLFDGFELTGRFLLRNVLEPRGQSHSDARAGFINAITRALQRPAES</sequence>
<accession>B3QJH7</accession>
<evidence type="ECO:0000255" key="1">
    <source>
        <dbReference type="HAMAP-Rule" id="MF_00201"/>
    </source>
</evidence>
<comment type="function">
    <text evidence="1">Involved in DNA repair and RecF pathway recombination.</text>
</comment>
<comment type="similarity">
    <text evidence="1">Belongs to the RecO family.</text>
</comment>
<name>RECO_RHOPT</name>